<comment type="function">
    <text>Stabilizes the aggregates of proteoglycan monomers with hyaluronic acid in the extracellular cartilage matrix.</text>
</comment>
<comment type="subcellular location">
    <subcellularLocation>
        <location>Secreted</location>
        <location>Extracellular space</location>
        <location>Extracellular matrix</location>
    </subcellularLocation>
</comment>
<comment type="tissue specificity">
    <text evidence="4">Ubiquitously expressed.</text>
</comment>
<comment type="similarity">
    <text evidence="5">Belongs to the HAPLN family.</text>
</comment>
<reference key="1">
    <citation type="journal article" date="1999" name="Cytogenet. Cell Genet.">
        <title>Characterization and chromosomal location of the mouse link protein gene (Crtl1).</title>
        <authorList>
            <person name="Deak F."/>
            <person name="Mates L."/>
            <person name="Krysan K."/>
            <person name="Liu Z."/>
            <person name="Szabo P.E."/>
            <person name="Mann J.R."/>
            <person name="Beier D.R."/>
            <person name="Kiss I."/>
        </authorList>
    </citation>
    <scope>NUCLEOTIDE SEQUENCE [GENOMIC DNA / MRNA]</scope>
    <source>
        <strain>129/Sv</strain>
    </source>
</reference>
<reference key="2">
    <citation type="journal article" date="2003" name="J. Biol. Chem.">
        <title>Genetic rescue of chondrodysplasia and the perinatal lethal effect of cartilage link protein deficiency.</title>
        <authorList>
            <person name="Czipri M."/>
            <person name="Otto J.M."/>
            <person name="Cs-Szabo G."/>
            <person name="Kamath R.V."/>
            <person name="Vermes C."/>
            <person name="Firneisz G."/>
            <person name="Kolman K.J."/>
            <person name="Watanabe H."/>
            <person name="Li Y."/>
            <person name="Roughley P.J."/>
            <person name="Yamada Y."/>
            <person name="Olsen B.R."/>
            <person name="Glant T.T."/>
        </authorList>
    </citation>
    <scope>NUCLEOTIDE SEQUENCE [MRNA]</scope>
    <scope>TISSUE SPECIFICITY</scope>
    <source>
        <strain>BALB/cJ</strain>
    </source>
</reference>
<reference key="3">
    <citation type="journal article" date="2005" name="Science">
        <title>The transcriptional landscape of the mammalian genome.</title>
        <authorList>
            <person name="Carninci P."/>
            <person name="Kasukawa T."/>
            <person name="Katayama S."/>
            <person name="Gough J."/>
            <person name="Frith M.C."/>
            <person name="Maeda N."/>
            <person name="Oyama R."/>
            <person name="Ravasi T."/>
            <person name="Lenhard B."/>
            <person name="Wells C."/>
            <person name="Kodzius R."/>
            <person name="Shimokawa K."/>
            <person name="Bajic V.B."/>
            <person name="Brenner S.E."/>
            <person name="Batalov S."/>
            <person name="Forrest A.R."/>
            <person name="Zavolan M."/>
            <person name="Davis M.J."/>
            <person name="Wilming L.G."/>
            <person name="Aidinis V."/>
            <person name="Allen J.E."/>
            <person name="Ambesi-Impiombato A."/>
            <person name="Apweiler R."/>
            <person name="Aturaliya R.N."/>
            <person name="Bailey T.L."/>
            <person name="Bansal M."/>
            <person name="Baxter L."/>
            <person name="Beisel K.W."/>
            <person name="Bersano T."/>
            <person name="Bono H."/>
            <person name="Chalk A.M."/>
            <person name="Chiu K.P."/>
            <person name="Choudhary V."/>
            <person name="Christoffels A."/>
            <person name="Clutterbuck D.R."/>
            <person name="Crowe M.L."/>
            <person name="Dalla E."/>
            <person name="Dalrymple B.P."/>
            <person name="de Bono B."/>
            <person name="Della Gatta G."/>
            <person name="di Bernardo D."/>
            <person name="Down T."/>
            <person name="Engstrom P."/>
            <person name="Fagiolini M."/>
            <person name="Faulkner G."/>
            <person name="Fletcher C.F."/>
            <person name="Fukushima T."/>
            <person name="Furuno M."/>
            <person name="Futaki S."/>
            <person name="Gariboldi M."/>
            <person name="Georgii-Hemming P."/>
            <person name="Gingeras T.R."/>
            <person name="Gojobori T."/>
            <person name="Green R.E."/>
            <person name="Gustincich S."/>
            <person name="Harbers M."/>
            <person name="Hayashi Y."/>
            <person name="Hensch T.K."/>
            <person name="Hirokawa N."/>
            <person name="Hill D."/>
            <person name="Huminiecki L."/>
            <person name="Iacono M."/>
            <person name="Ikeo K."/>
            <person name="Iwama A."/>
            <person name="Ishikawa T."/>
            <person name="Jakt M."/>
            <person name="Kanapin A."/>
            <person name="Katoh M."/>
            <person name="Kawasawa Y."/>
            <person name="Kelso J."/>
            <person name="Kitamura H."/>
            <person name="Kitano H."/>
            <person name="Kollias G."/>
            <person name="Krishnan S.P."/>
            <person name="Kruger A."/>
            <person name="Kummerfeld S.K."/>
            <person name="Kurochkin I.V."/>
            <person name="Lareau L.F."/>
            <person name="Lazarevic D."/>
            <person name="Lipovich L."/>
            <person name="Liu J."/>
            <person name="Liuni S."/>
            <person name="McWilliam S."/>
            <person name="Madan Babu M."/>
            <person name="Madera M."/>
            <person name="Marchionni L."/>
            <person name="Matsuda H."/>
            <person name="Matsuzawa S."/>
            <person name="Miki H."/>
            <person name="Mignone F."/>
            <person name="Miyake S."/>
            <person name="Morris K."/>
            <person name="Mottagui-Tabar S."/>
            <person name="Mulder N."/>
            <person name="Nakano N."/>
            <person name="Nakauchi H."/>
            <person name="Ng P."/>
            <person name="Nilsson R."/>
            <person name="Nishiguchi S."/>
            <person name="Nishikawa S."/>
            <person name="Nori F."/>
            <person name="Ohara O."/>
            <person name="Okazaki Y."/>
            <person name="Orlando V."/>
            <person name="Pang K.C."/>
            <person name="Pavan W.J."/>
            <person name="Pavesi G."/>
            <person name="Pesole G."/>
            <person name="Petrovsky N."/>
            <person name="Piazza S."/>
            <person name="Reed J."/>
            <person name="Reid J.F."/>
            <person name="Ring B.Z."/>
            <person name="Ringwald M."/>
            <person name="Rost B."/>
            <person name="Ruan Y."/>
            <person name="Salzberg S.L."/>
            <person name="Sandelin A."/>
            <person name="Schneider C."/>
            <person name="Schoenbach C."/>
            <person name="Sekiguchi K."/>
            <person name="Semple C.A."/>
            <person name="Seno S."/>
            <person name="Sessa L."/>
            <person name="Sheng Y."/>
            <person name="Shibata Y."/>
            <person name="Shimada H."/>
            <person name="Shimada K."/>
            <person name="Silva D."/>
            <person name="Sinclair B."/>
            <person name="Sperling S."/>
            <person name="Stupka E."/>
            <person name="Sugiura K."/>
            <person name="Sultana R."/>
            <person name="Takenaka Y."/>
            <person name="Taki K."/>
            <person name="Tammoja K."/>
            <person name="Tan S.L."/>
            <person name="Tang S."/>
            <person name="Taylor M.S."/>
            <person name="Tegner J."/>
            <person name="Teichmann S.A."/>
            <person name="Ueda H.R."/>
            <person name="van Nimwegen E."/>
            <person name="Verardo R."/>
            <person name="Wei C.L."/>
            <person name="Yagi K."/>
            <person name="Yamanishi H."/>
            <person name="Zabarovsky E."/>
            <person name="Zhu S."/>
            <person name="Zimmer A."/>
            <person name="Hide W."/>
            <person name="Bult C."/>
            <person name="Grimmond S.M."/>
            <person name="Teasdale R.D."/>
            <person name="Liu E.T."/>
            <person name="Brusic V."/>
            <person name="Quackenbush J."/>
            <person name="Wahlestedt C."/>
            <person name="Mattick J.S."/>
            <person name="Hume D.A."/>
            <person name="Kai C."/>
            <person name="Sasaki D."/>
            <person name="Tomaru Y."/>
            <person name="Fukuda S."/>
            <person name="Kanamori-Katayama M."/>
            <person name="Suzuki M."/>
            <person name="Aoki J."/>
            <person name="Arakawa T."/>
            <person name="Iida J."/>
            <person name="Imamura K."/>
            <person name="Itoh M."/>
            <person name="Kato T."/>
            <person name="Kawaji H."/>
            <person name="Kawagashira N."/>
            <person name="Kawashima T."/>
            <person name="Kojima M."/>
            <person name="Kondo S."/>
            <person name="Konno H."/>
            <person name="Nakano K."/>
            <person name="Ninomiya N."/>
            <person name="Nishio T."/>
            <person name="Okada M."/>
            <person name="Plessy C."/>
            <person name="Shibata K."/>
            <person name="Shiraki T."/>
            <person name="Suzuki S."/>
            <person name="Tagami M."/>
            <person name="Waki K."/>
            <person name="Watahiki A."/>
            <person name="Okamura-Oho Y."/>
            <person name="Suzuki H."/>
            <person name="Kawai J."/>
            <person name="Hayashizaki Y."/>
        </authorList>
    </citation>
    <scope>NUCLEOTIDE SEQUENCE [LARGE SCALE MRNA]</scope>
    <source>
        <strain>C57BL/6J</strain>
        <tissue>Embryo</tissue>
        <tissue>Embryonic head</tissue>
    </source>
</reference>
<reference key="4">
    <citation type="journal article" date="2004" name="Genome Res.">
        <title>The status, quality, and expansion of the NIH full-length cDNA project: the Mammalian Gene Collection (MGC).</title>
        <authorList>
            <consortium name="The MGC Project Team"/>
        </authorList>
    </citation>
    <scope>NUCLEOTIDE SEQUENCE [LARGE SCALE MRNA]</scope>
    <source>
        <strain>C57BL/6J</strain>
        <tissue>Embryo</tissue>
    </source>
</reference>
<reference key="5">
    <citation type="journal article" date="2010" name="Cell">
        <title>A tissue-specific atlas of mouse protein phosphorylation and expression.</title>
        <authorList>
            <person name="Huttlin E.L."/>
            <person name="Jedrychowski M.P."/>
            <person name="Elias J.E."/>
            <person name="Goswami T."/>
            <person name="Rad R."/>
            <person name="Beausoleil S.A."/>
            <person name="Villen J."/>
            <person name="Haas W."/>
            <person name="Sowa M.E."/>
            <person name="Gygi S.P."/>
        </authorList>
    </citation>
    <scope>IDENTIFICATION BY MASS SPECTROMETRY [LARGE SCALE ANALYSIS]</scope>
    <source>
        <tissue>Brain</tissue>
    </source>
</reference>
<sequence>MRSLLLLVLISVCWADHHLSDSYTPPDQDRVIHIQAENGPRLLVEAEQAKVFSHRGGNVTLPCKFYRDPTAFGSGIHKIRIKWTKLTSDYLREVDVFVSMGYHKKTYGGYQGRVFLKGGSDNDASLVITDLTLEDYGRYKCEVIEGLEDDTAVVALELQGVVFPYFPRLGRYNLNFHEARQACLDQDAVIASFDQLYDAWRGGLDWCNAGWLSDGSVQYPITKPREPCGGQNTVPGVRNYGFWDKDKSRYDVFCFTSNFNGRFYYLIHPTKLTYDEAVQACLNDGAQIAKVGQIFAAWKLLGYDRCDAGWLADGSVRYPISRPRRRCSPTEAAVRFVGFPDKKHKLYGVYCFRAYN</sequence>
<keyword id="KW-1015">Disulfide bond</keyword>
<keyword id="KW-0272">Extracellular matrix</keyword>
<keyword id="KW-0325">Glycoprotein</keyword>
<keyword id="KW-0373">Hyaluronic acid</keyword>
<keyword id="KW-0393">Immunoglobulin domain</keyword>
<keyword id="KW-1185">Reference proteome</keyword>
<keyword id="KW-0677">Repeat</keyword>
<keyword id="KW-0964">Secreted</keyword>
<proteinExistence type="evidence at protein level"/>
<dbReference type="EMBL" id="AF137278">
    <property type="protein sequence ID" value="AAF24166.1"/>
    <property type="molecule type" value="Genomic_DNA"/>
</dbReference>
<dbReference type="EMBL" id="AF137275">
    <property type="protein sequence ID" value="AAF24166.1"/>
    <property type="status" value="JOINED"/>
    <property type="molecule type" value="Genomic_DNA"/>
</dbReference>
<dbReference type="EMBL" id="AF137276">
    <property type="protein sequence ID" value="AAF24166.1"/>
    <property type="status" value="JOINED"/>
    <property type="molecule type" value="Genomic_DNA"/>
</dbReference>
<dbReference type="EMBL" id="AF137277">
    <property type="protein sequence ID" value="AAF24166.1"/>
    <property type="status" value="JOINED"/>
    <property type="molecule type" value="Genomic_DNA"/>
</dbReference>
<dbReference type="EMBL" id="AF139572">
    <property type="protein sequence ID" value="AAF24977.1"/>
    <property type="molecule type" value="mRNA"/>
</dbReference>
<dbReference type="EMBL" id="AF098460">
    <property type="protein sequence ID" value="AAD12253.1"/>
    <property type="molecule type" value="mRNA"/>
</dbReference>
<dbReference type="EMBL" id="AK032750">
    <property type="protein sequence ID" value="BAC28007.1"/>
    <property type="molecule type" value="mRNA"/>
</dbReference>
<dbReference type="EMBL" id="AK048107">
    <property type="protein sequence ID" value="BAC33244.1"/>
    <property type="molecule type" value="mRNA"/>
</dbReference>
<dbReference type="EMBL" id="BC066853">
    <property type="protein sequence ID" value="AAH66853.1"/>
    <property type="molecule type" value="mRNA"/>
</dbReference>
<dbReference type="CCDS" id="CCDS26671.1"/>
<dbReference type="RefSeq" id="NP_038528.3">
    <property type="nucleotide sequence ID" value="NM_013500.4"/>
</dbReference>
<dbReference type="SMR" id="Q9QUP5"/>
<dbReference type="BioGRID" id="198904">
    <property type="interactions" value="5"/>
</dbReference>
<dbReference type="FunCoup" id="Q9QUP5">
    <property type="interactions" value="162"/>
</dbReference>
<dbReference type="IntAct" id="Q9QUP5">
    <property type="interactions" value="2"/>
</dbReference>
<dbReference type="MINT" id="Q9QUP5"/>
<dbReference type="STRING" id="10090.ENSMUSP00000022108"/>
<dbReference type="GlyConnect" id="2373">
    <property type="glycosylation" value="9 N-Linked glycans (1 site)"/>
</dbReference>
<dbReference type="GlyCosmos" id="Q9QUP5">
    <property type="glycosylation" value="1 site, 9 glycans"/>
</dbReference>
<dbReference type="GlyGen" id="Q9QUP5">
    <property type="glycosylation" value="2 sites, 9 N-linked glycans (1 site), 1 O-linked glycan (1 site)"/>
</dbReference>
<dbReference type="iPTMnet" id="Q9QUP5"/>
<dbReference type="PhosphoSitePlus" id="Q9QUP5"/>
<dbReference type="SwissPalm" id="Q9QUP5"/>
<dbReference type="jPOST" id="Q9QUP5"/>
<dbReference type="PaxDb" id="10090-ENSMUSP00000022108"/>
<dbReference type="PeptideAtlas" id="Q9QUP5"/>
<dbReference type="ProteomicsDB" id="273270"/>
<dbReference type="Antibodypedia" id="12888">
    <property type="antibodies" value="244 antibodies from 29 providers"/>
</dbReference>
<dbReference type="Ensembl" id="ENSMUST00000022108.9">
    <property type="protein sequence ID" value="ENSMUSP00000022108.8"/>
    <property type="gene ID" value="ENSMUSG00000021613.10"/>
</dbReference>
<dbReference type="GeneID" id="12950"/>
<dbReference type="KEGG" id="mmu:12950"/>
<dbReference type="UCSC" id="uc007rjf.2">
    <property type="organism name" value="mouse"/>
</dbReference>
<dbReference type="AGR" id="MGI:1337006"/>
<dbReference type="CTD" id="1404"/>
<dbReference type="MGI" id="MGI:1337006">
    <property type="gene designation" value="Hapln1"/>
</dbReference>
<dbReference type="VEuPathDB" id="HostDB:ENSMUSG00000021613"/>
<dbReference type="eggNOG" id="ENOG502QRAR">
    <property type="taxonomic scope" value="Eukaryota"/>
</dbReference>
<dbReference type="GeneTree" id="ENSGT00940000159267"/>
<dbReference type="HOGENOM" id="CLU_052285_1_0_1"/>
<dbReference type="InParanoid" id="Q9QUP5"/>
<dbReference type="OMA" id="ERACHDQ"/>
<dbReference type="OrthoDB" id="5359219at2759"/>
<dbReference type="PhylomeDB" id="Q9QUP5"/>
<dbReference type="TreeFam" id="TF332134"/>
<dbReference type="Reactome" id="R-MMU-3000178">
    <property type="pathway name" value="ECM proteoglycans"/>
</dbReference>
<dbReference type="BioGRID-ORCS" id="12950">
    <property type="hits" value="0 hits in 79 CRISPR screens"/>
</dbReference>
<dbReference type="CD-CODE" id="CE726F99">
    <property type="entry name" value="Postsynaptic density"/>
</dbReference>
<dbReference type="ChiTaRS" id="Hapln1">
    <property type="organism name" value="mouse"/>
</dbReference>
<dbReference type="PRO" id="PR:Q9QUP5"/>
<dbReference type="Proteomes" id="UP000000589">
    <property type="component" value="Chromosome 13"/>
</dbReference>
<dbReference type="RNAct" id="Q9QUP5">
    <property type="molecule type" value="protein"/>
</dbReference>
<dbReference type="Bgee" id="ENSMUSG00000021613">
    <property type="expression patterns" value="Expressed in humerus cartilage element and 182 other cell types or tissues"/>
</dbReference>
<dbReference type="GO" id="GO:0062023">
    <property type="term" value="C:collagen-containing extracellular matrix"/>
    <property type="evidence" value="ECO:0007005"/>
    <property type="project" value="BHF-UCL"/>
</dbReference>
<dbReference type="GO" id="GO:0031012">
    <property type="term" value="C:extracellular matrix"/>
    <property type="evidence" value="ECO:0000314"/>
    <property type="project" value="MGI"/>
</dbReference>
<dbReference type="GO" id="GO:0005576">
    <property type="term" value="C:extracellular region"/>
    <property type="evidence" value="ECO:0007669"/>
    <property type="project" value="UniProtKB-KW"/>
</dbReference>
<dbReference type="GO" id="GO:0045202">
    <property type="term" value="C:synapse"/>
    <property type="evidence" value="ECO:0000314"/>
    <property type="project" value="SynGO"/>
</dbReference>
<dbReference type="GO" id="GO:0005540">
    <property type="term" value="F:hyaluronic acid binding"/>
    <property type="evidence" value="ECO:0007669"/>
    <property type="project" value="UniProtKB-KW"/>
</dbReference>
<dbReference type="GO" id="GO:0007155">
    <property type="term" value="P:cell adhesion"/>
    <property type="evidence" value="ECO:0007669"/>
    <property type="project" value="InterPro"/>
</dbReference>
<dbReference type="CDD" id="cd05877">
    <property type="entry name" value="Ig_LP_like"/>
    <property type="match status" value="1"/>
</dbReference>
<dbReference type="CDD" id="cd03518">
    <property type="entry name" value="Link_domain_HAPLN_module_1"/>
    <property type="match status" value="1"/>
</dbReference>
<dbReference type="CDD" id="cd03519">
    <property type="entry name" value="Link_domain_HAPLN_module_2"/>
    <property type="match status" value="1"/>
</dbReference>
<dbReference type="FunFam" id="2.60.40.10:FF:000631">
    <property type="entry name" value="Hyaluronan and proteoglycan link protein 1"/>
    <property type="match status" value="1"/>
</dbReference>
<dbReference type="FunFam" id="3.10.100.10:FF:000001">
    <property type="entry name" value="Hyaluronan proteoglycan link protein 1"/>
    <property type="match status" value="1"/>
</dbReference>
<dbReference type="FunFam" id="3.10.100.10:FF:000002">
    <property type="entry name" value="Hyaluronan proteoglycan link protein 1"/>
    <property type="match status" value="1"/>
</dbReference>
<dbReference type="Gene3D" id="2.60.40.10">
    <property type="entry name" value="Immunoglobulins"/>
    <property type="match status" value="1"/>
</dbReference>
<dbReference type="Gene3D" id="3.10.100.10">
    <property type="entry name" value="Mannose-Binding Protein A, subunit A"/>
    <property type="match status" value="2"/>
</dbReference>
<dbReference type="InterPro" id="IPR016186">
    <property type="entry name" value="C-type_lectin-like/link_sf"/>
</dbReference>
<dbReference type="InterPro" id="IPR016187">
    <property type="entry name" value="CTDL_fold"/>
</dbReference>
<dbReference type="InterPro" id="IPR050691">
    <property type="entry name" value="Hyaluronan_bind_Proteoglycan"/>
</dbReference>
<dbReference type="InterPro" id="IPR007110">
    <property type="entry name" value="Ig-like_dom"/>
</dbReference>
<dbReference type="InterPro" id="IPR036179">
    <property type="entry name" value="Ig-like_dom_sf"/>
</dbReference>
<dbReference type="InterPro" id="IPR013783">
    <property type="entry name" value="Ig-like_fold"/>
</dbReference>
<dbReference type="InterPro" id="IPR003599">
    <property type="entry name" value="Ig_sub"/>
</dbReference>
<dbReference type="InterPro" id="IPR013106">
    <property type="entry name" value="Ig_V-set"/>
</dbReference>
<dbReference type="InterPro" id="IPR000538">
    <property type="entry name" value="Link_dom"/>
</dbReference>
<dbReference type="PANTHER" id="PTHR22804">
    <property type="entry name" value="AGGRECAN/VERSICAN PROTEOGLYCAN"/>
    <property type="match status" value="1"/>
</dbReference>
<dbReference type="PANTHER" id="PTHR22804:SF10">
    <property type="entry name" value="HYALURONAN AND PROTEOGLYCAN LINK PROTEIN 1"/>
    <property type="match status" value="1"/>
</dbReference>
<dbReference type="Pfam" id="PF07686">
    <property type="entry name" value="V-set"/>
    <property type="match status" value="1"/>
</dbReference>
<dbReference type="Pfam" id="PF00193">
    <property type="entry name" value="Xlink"/>
    <property type="match status" value="2"/>
</dbReference>
<dbReference type="PRINTS" id="PR01265">
    <property type="entry name" value="LINKMODULE"/>
</dbReference>
<dbReference type="SMART" id="SM00409">
    <property type="entry name" value="IG"/>
    <property type="match status" value="1"/>
</dbReference>
<dbReference type="SMART" id="SM00406">
    <property type="entry name" value="IGv"/>
    <property type="match status" value="1"/>
</dbReference>
<dbReference type="SMART" id="SM00445">
    <property type="entry name" value="LINK"/>
    <property type="match status" value="2"/>
</dbReference>
<dbReference type="SUPFAM" id="SSF56436">
    <property type="entry name" value="C-type lectin-like"/>
    <property type="match status" value="2"/>
</dbReference>
<dbReference type="SUPFAM" id="SSF48726">
    <property type="entry name" value="Immunoglobulin"/>
    <property type="match status" value="1"/>
</dbReference>
<dbReference type="PROSITE" id="PS50835">
    <property type="entry name" value="IG_LIKE"/>
    <property type="match status" value="1"/>
</dbReference>
<dbReference type="PROSITE" id="PS01241">
    <property type="entry name" value="LINK_1"/>
    <property type="match status" value="2"/>
</dbReference>
<dbReference type="PROSITE" id="PS50963">
    <property type="entry name" value="LINK_2"/>
    <property type="match status" value="2"/>
</dbReference>
<accession>Q9QUP5</accession>
<accession>Q9D1G9</accession>
<accession>Q9Z1X7</accession>
<evidence type="ECO:0000250" key="1"/>
<evidence type="ECO:0000255" key="2"/>
<evidence type="ECO:0000255" key="3">
    <source>
        <dbReference type="PROSITE-ProRule" id="PRU00323"/>
    </source>
</evidence>
<evidence type="ECO:0000269" key="4">
    <source>
    </source>
</evidence>
<evidence type="ECO:0000305" key="5"/>
<name>HPLN1_MOUSE</name>
<feature type="propeptide" id="PRO_0000013179" evidence="1">
    <location>
        <begin position="1"/>
        <end position="9"/>
    </location>
</feature>
<feature type="chain" id="PRO_0000013180" description="Hyaluronan and proteoglycan link protein 1">
    <location>
        <begin position="10"/>
        <end position="356"/>
    </location>
</feature>
<feature type="domain" description="Ig-like V-type">
    <location>
        <begin position="40"/>
        <end position="154"/>
    </location>
</feature>
<feature type="domain" description="Link 1" evidence="3">
    <location>
        <begin position="161"/>
        <end position="256"/>
    </location>
</feature>
<feature type="domain" description="Link 2" evidence="3">
    <location>
        <begin position="261"/>
        <end position="353"/>
    </location>
</feature>
<feature type="glycosylation site" description="N-linked (GlcNAc...) asparagine" evidence="2">
    <location>
        <position position="58"/>
    </location>
</feature>
<feature type="disulfide bond" evidence="1">
    <location>
        <begin position="63"/>
        <end position="141"/>
    </location>
</feature>
<feature type="disulfide bond" evidence="1">
    <location>
        <begin position="183"/>
        <end position="254"/>
    </location>
</feature>
<feature type="disulfide bond" evidence="1">
    <location>
        <begin position="207"/>
        <end position="228"/>
    </location>
</feature>
<feature type="disulfide bond" evidence="1">
    <location>
        <begin position="281"/>
        <end position="351"/>
    </location>
</feature>
<feature type="disulfide bond" evidence="1">
    <location>
        <begin position="306"/>
        <end position="327"/>
    </location>
</feature>
<feature type="sequence conflict" description="In Ref. 2; AAD12253." evidence="5" ref="2">
    <location>
        <position position="18"/>
    </location>
</feature>
<feature type="sequence conflict" description="In Ref. 4; AAH66853." evidence="5" ref="4">
    <original>Q</original>
    <variation>H</variation>
    <location>
        <position position="35"/>
    </location>
</feature>
<organism>
    <name type="scientific">Mus musculus</name>
    <name type="common">Mouse</name>
    <dbReference type="NCBI Taxonomy" id="10090"/>
    <lineage>
        <taxon>Eukaryota</taxon>
        <taxon>Metazoa</taxon>
        <taxon>Chordata</taxon>
        <taxon>Craniata</taxon>
        <taxon>Vertebrata</taxon>
        <taxon>Euteleostomi</taxon>
        <taxon>Mammalia</taxon>
        <taxon>Eutheria</taxon>
        <taxon>Euarchontoglires</taxon>
        <taxon>Glires</taxon>
        <taxon>Rodentia</taxon>
        <taxon>Myomorpha</taxon>
        <taxon>Muroidea</taxon>
        <taxon>Muridae</taxon>
        <taxon>Murinae</taxon>
        <taxon>Mus</taxon>
        <taxon>Mus</taxon>
    </lineage>
</organism>
<gene>
    <name type="primary">Hapln1</name>
    <name type="synonym">Crtl1</name>
</gene>
<protein>
    <recommendedName>
        <fullName>Hyaluronan and proteoglycan link protein 1</fullName>
    </recommendedName>
    <alternativeName>
        <fullName>Cartilage-linking protein 1</fullName>
        <shortName>Cartilage-link protein</shortName>
    </alternativeName>
    <alternativeName>
        <fullName>Proteoglycan link protein</fullName>
    </alternativeName>
</protein>